<accession>P83510</accession>
<comment type="function">
    <text evidence="2">Serine/threonine kinase that acts as an essential activator of the Wnt signaling pathway. Recruited to promoters of Wnt target genes and required to activate their expression. May act by phosphorylating TCF4/TCF7L2. Appears to act upstream of the JUN N-terminal pathway. May play a role in the response to environmental stress. Part of a signaling complex composed of NEDD4, RAP2A and TNIK which regulates neuronal dendrite extension and arborization during development. More generally, it may play a role in cytoskeletal rearrangements and regulate cell spreading. Phosphorylates SMAD1 on Thr-322. Activator of the Hippo signaling pathway which plays a pivotal role in organ size control and tumor suppression by restricting proliferation and promoting apoptosis. MAP4Ks act in parallel to and are partially redundant with STK3/MST2 and STK4/MST2 in the phosphorylation and activation of LATS1/2, and establish MAP4Ks as components of the expanded Hippo pathway.</text>
</comment>
<comment type="catalytic activity">
    <reaction evidence="2">
        <text>L-seryl-[protein] + ATP = O-phospho-L-seryl-[protein] + ADP + H(+)</text>
        <dbReference type="Rhea" id="RHEA:17989"/>
        <dbReference type="Rhea" id="RHEA-COMP:9863"/>
        <dbReference type="Rhea" id="RHEA-COMP:11604"/>
        <dbReference type="ChEBI" id="CHEBI:15378"/>
        <dbReference type="ChEBI" id="CHEBI:29999"/>
        <dbReference type="ChEBI" id="CHEBI:30616"/>
        <dbReference type="ChEBI" id="CHEBI:83421"/>
        <dbReference type="ChEBI" id="CHEBI:456216"/>
        <dbReference type="EC" id="2.7.11.1"/>
    </reaction>
</comment>
<comment type="catalytic activity">
    <reaction evidence="2">
        <text>L-threonyl-[protein] + ATP = O-phospho-L-threonyl-[protein] + ADP + H(+)</text>
        <dbReference type="Rhea" id="RHEA:46608"/>
        <dbReference type="Rhea" id="RHEA-COMP:11060"/>
        <dbReference type="Rhea" id="RHEA-COMP:11605"/>
        <dbReference type="ChEBI" id="CHEBI:15378"/>
        <dbReference type="ChEBI" id="CHEBI:30013"/>
        <dbReference type="ChEBI" id="CHEBI:30616"/>
        <dbReference type="ChEBI" id="CHEBI:61977"/>
        <dbReference type="ChEBI" id="CHEBI:456216"/>
        <dbReference type="EC" id="2.7.11.1"/>
    </reaction>
</comment>
<comment type="subunit">
    <text evidence="7 8">Interacts (via the CNH domain) with RAP2A (GTP-bound form preferentially); the interaction is direct and required for the activation of TNIK by RAP2A. Interacts with NEDD4; recruits RAP2A to NEDD4. Interacts with TRAF2 and NCK. Interacts with TCF7L2/TCF4 and CTNNB1; the interaction is direct. Interacts with TANC1.</text>
</comment>
<comment type="subcellular location">
    <subcellularLocation>
        <location evidence="7">Nucleus</location>
    </subcellularLocation>
    <subcellularLocation>
        <location evidence="7">Cytoplasm</location>
    </subcellularLocation>
    <subcellularLocation>
        <location evidence="1">Recycling endosome</location>
    </subcellularLocation>
    <subcellularLocation>
        <location evidence="1">Cytoplasm</location>
        <location evidence="1">Cytoskeleton</location>
    </subcellularLocation>
    <text evidence="1">Associated with recycling endosomes and the cytoskeletal fraction upon RAP2A overexpression.</text>
</comment>
<comment type="alternative products">
    <event type="alternative splicing"/>
    <isoform>
        <id>P83510-1</id>
        <name>1</name>
        <sequence type="displayed"/>
    </isoform>
    <isoform>
        <id>P83510-2</id>
        <name>2</name>
        <sequence type="described" ref="VSP_007351"/>
    </isoform>
</comment>
<comment type="PTM">
    <text evidence="1">Autophosphorylated. Autophosphorylation is activated by RAP2A and induces association to the cytoskeletal fraction.</text>
</comment>
<comment type="similarity">
    <text evidence="10">Belongs to the protein kinase superfamily. STE Ser/Thr protein kinase family. STE20 subfamily.</text>
</comment>
<comment type="sequence caution" evidence="10">
    <conflict type="miscellaneous discrepancy">
        <sequence resource="EMBL-CDS" id="BAC65588"/>
    </conflict>
    <text>Probable cloning artifact.</text>
</comment>
<proteinExistence type="evidence at protein level"/>
<organism evidence="11">
    <name type="scientific">Mus musculus</name>
    <name type="common">Mouse</name>
    <dbReference type="NCBI Taxonomy" id="10090"/>
    <lineage>
        <taxon>Eukaryota</taxon>
        <taxon>Metazoa</taxon>
        <taxon>Chordata</taxon>
        <taxon>Craniata</taxon>
        <taxon>Vertebrata</taxon>
        <taxon>Euteleostomi</taxon>
        <taxon>Mammalia</taxon>
        <taxon>Eutheria</taxon>
        <taxon>Euarchontoglires</taxon>
        <taxon>Glires</taxon>
        <taxon>Rodentia</taxon>
        <taxon>Myomorpha</taxon>
        <taxon>Muroidea</taxon>
        <taxon>Muridae</taxon>
        <taxon>Murinae</taxon>
        <taxon>Mus</taxon>
        <taxon>Mus</taxon>
    </lineage>
</organism>
<keyword id="KW-0025">Alternative splicing</keyword>
<keyword id="KW-0067">ATP-binding</keyword>
<keyword id="KW-0963">Cytoplasm</keyword>
<keyword id="KW-0206">Cytoskeleton</keyword>
<keyword id="KW-0967">Endosome</keyword>
<keyword id="KW-0418">Kinase</keyword>
<keyword id="KW-0524">Neurogenesis</keyword>
<keyword id="KW-0547">Nucleotide-binding</keyword>
<keyword id="KW-0539">Nucleus</keyword>
<keyword id="KW-0597">Phosphoprotein</keyword>
<keyword id="KW-1185">Reference proteome</keyword>
<keyword id="KW-0723">Serine/threonine-protein kinase</keyword>
<keyword id="KW-0808">Transferase</keyword>
<keyword id="KW-0879">Wnt signaling pathway</keyword>
<sequence>MASDSPARSLDEIDLSALRDPAGIFELVELVGNGTYGQVYKGRHVKTGQLAAIKVMDVTGDEEEEIKQEINMLKKYSHHRNIATYYGAFIKKNPPGMDDQLWLVMEFCGAGSVTDLIKNTKGNTLKEEWIAYICREILRGLSHLHQHKVIHRDIKGQNVLLTENAEVKLVDFGVSAQLDRTVGRRNTFIGTPYWMAPEVIACDENPDATYDFKSDLWSLGITAIEMAEGAPPLCDMHPMRALFLIPRNPAPRLKSKKWSKKFQSFIESCLVKNHSQRPATEQLMKHPFIRDQPNERQVRIQLKDHIDRTKKKRGEKDETEYEYSGSEEEEEENDSGEPSSILNLPGESTLRRDFLRLQLANKERSEALRRQQLEQQQRENEEHKRQLLAERQKRIEEQKEQRRRLEEQQRREKELRKQQEREQRRHYEEQMRREEERRRAEHEQEYKRKQLEEQRQAERLQRQLKQERDYLVSLQHQRQEQRPLEKKPLYHYKEGMSPSEKPAWAKEVEERSRLNRQSSPAMPHKVANRISDPNLPPRSESFSISGVQPARTPPMLRPVDPQIPQLVAVKSQGPALTASQSVHEQPTKGLSGFQEALNVTSHRVEMPRQNSDPTSENPPLPTRIEKFDRSSWLRQEEDIPPKVPQRTTSISPALARKNSPGNGSALGPRLGSQPIRASNPDLRRTEPVLESSLQRTSSGSSSSSSTPSSQPSSQGGSQPGSQAGSSERSRVRANSKSEGSPVLPHEPSKVKPEESRDITRPSRPADLTALAKELRELRIEETNRPLKKVTDYSSSSEESESSEEEEEDGESETHDGTVAVSDIPRLIPTGAPGNNEQYNMGMVGTHGLETSHADTFGGSISREGTLMIRETAEEKKRSGHSDSNGFAGHINLPDLVQQSHSPAGTPTEGLGRVSTHSQEMDSGAEYGIGSSTKASFTPFVDPRVYQTSPTDEDEEDDESSAAALFTSELLRQEQAKLNEARKISVVNVNPTNIRPHSDTPEIRKYKKRFNSEILCAALWGVNLLVGTENGLMLLDRSGQGKVYNLINRRRFQQMDVLEGLNVLVTISGKKNKLRVYYLSWLRNRILHNDPEVEKKQGWITVGDLEGCIHYKVVKYERIKFLVIALKNAVEIYAWAPKPYHKFMAFKSFADLQHKPLLVDLTVEEGQRLKVIFGSHTGFHVIDVDSGNSYDIYIPSHIQGNITPHAIVILPKTDGMEMLVCYEDEGVYVNTYGRITKDVVLQWGEMPTSVAYIHSNQIMGWGEKAIEIRSVETGHLDGVFMHKRAQRLKFLCERNDKVFFASVRSGGSSQVFFMTLNRNSMMNW</sequence>
<dbReference type="EC" id="2.7.11.1"/>
<dbReference type="EMBL" id="AK039113">
    <property type="protein sequence ID" value="BAC30241.1"/>
    <property type="molecule type" value="mRNA"/>
</dbReference>
<dbReference type="EMBL" id="AK041777">
    <property type="protein sequence ID" value="BAC31061.2"/>
    <property type="molecule type" value="mRNA"/>
</dbReference>
<dbReference type="EMBL" id="AK088459">
    <property type="protein sequence ID" value="BAC40365.1"/>
    <property type="molecule type" value="mRNA"/>
</dbReference>
<dbReference type="EMBL" id="BC050866">
    <property type="status" value="NOT_ANNOTATED_CDS"/>
    <property type="molecule type" value="mRNA"/>
</dbReference>
<dbReference type="EMBL" id="AK122306">
    <property type="protein sequence ID" value="BAC65588.2"/>
    <property type="status" value="ALT_SEQ"/>
    <property type="molecule type" value="Transcribed_RNA"/>
</dbReference>
<dbReference type="CCDS" id="CCDS50879.1">
    <molecule id="P83510-1"/>
</dbReference>
<dbReference type="RefSeq" id="NP_001156480.1">
    <molecule id="P83510-1"/>
    <property type="nucleotide sequence ID" value="NM_001163008.1"/>
</dbReference>
<dbReference type="SMR" id="P83510"/>
<dbReference type="BioGRID" id="576981">
    <property type="interactions" value="261"/>
</dbReference>
<dbReference type="DIP" id="DIP-57467N"/>
<dbReference type="FunCoup" id="P83510">
    <property type="interactions" value="1938"/>
</dbReference>
<dbReference type="IntAct" id="P83510">
    <property type="interactions" value="255"/>
</dbReference>
<dbReference type="MINT" id="P83510"/>
<dbReference type="STRING" id="10090.ENSMUSP00000125081"/>
<dbReference type="GlyGen" id="P83510">
    <property type="glycosylation" value="7 sites, 3 N-linked glycans (3 sites), 1 O-linked glycan (3 sites)"/>
</dbReference>
<dbReference type="iPTMnet" id="P83510"/>
<dbReference type="PhosphoSitePlus" id="P83510"/>
<dbReference type="jPOST" id="P83510"/>
<dbReference type="PaxDb" id="10090-ENSMUSP00000125081"/>
<dbReference type="PeptideAtlas" id="P83510"/>
<dbReference type="ProteomicsDB" id="259277">
    <molecule id="P83510-1"/>
</dbReference>
<dbReference type="ProteomicsDB" id="259278">
    <molecule id="P83510-2"/>
</dbReference>
<dbReference type="Pumba" id="P83510"/>
<dbReference type="Antibodypedia" id="2086">
    <property type="antibodies" value="551 antibodies from 33 providers"/>
</dbReference>
<dbReference type="DNASU" id="665113"/>
<dbReference type="Ensembl" id="ENSMUST00000159236.9">
    <molecule id="P83510-1"/>
    <property type="protein sequence ID" value="ENSMUSP00000124681.3"/>
    <property type="gene ID" value="ENSMUSG00000027692.17"/>
</dbReference>
<dbReference type="GeneID" id="665113"/>
<dbReference type="KEGG" id="mmu:665113"/>
<dbReference type="UCSC" id="uc008oty.1">
    <molecule id="P83510-1"/>
    <property type="organism name" value="mouse"/>
</dbReference>
<dbReference type="AGR" id="MGI:1916264"/>
<dbReference type="CTD" id="23043"/>
<dbReference type="MGI" id="MGI:1916264">
    <property type="gene designation" value="Tnik"/>
</dbReference>
<dbReference type="VEuPathDB" id="HostDB:ENSMUSG00000027692"/>
<dbReference type="eggNOG" id="KOG0587">
    <property type="taxonomic scope" value="Eukaryota"/>
</dbReference>
<dbReference type="GeneTree" id="ENSGT00950000183196"/>
<dbReference type="InParanoid" id="P83510"/>
<dbReference type="OrthoDB" id="8957712at2759"/>
<dbReference type="Reactome" id="R-MMU-2559580">
    <property type="pathway name" value="Oxidative Stress Induced Senescence"/>
</dbReference>
<dbReference type="BioGRID-ORCS" id="665113">
    <property type="hits" value="3 hits in 80 CRISPR screens"/>
</dbReference>
<dbReference type="ChiTaRS" id="Tnik">
    <property type="organism name" value="mouse"/>
</dbReference>
<dbReference type="PRO" id="PR:P83510"/>
<dbReference type="Proteomes" id="UP000000589">
    <property type="component" value="Chromosome 3"/>
</dbReference>
<dbReference type="RNAct" id="P83510">
    <property type="molecule type" value="protein"/>
</dbReference>
<dbReference type="Bgee" id="ENSMUSG00000027692">
    <property type="expression patterns" value="Expressed in superior cervical ganglion and 210 other cell types or tissues"/>
</dbReference>
<dbReference type="ExpressionAtlas" id="P83510">
    <property type="expression patterns" value="baseline and differential"/>
</dbReference>
<dbReference type="GO" id="GO:0005737">
    <property type="term" value="C:cytoplasm"/>
    <property type="evidence" value="ECO:0000250"/>
    <property type="project" value="UniProtKB"/>
</dbReference>
<dbReference type="GO" id="GO:0005856">
    <property type="term" value="C:cytoskeleton"/>
    <property type="evidence" value="ECO:0000250"/>
    <property type="project" value="UniProtKB"/>
</dbReference>
<dbReference type="GO" id="GO:0098978">
    <property type="term" value="C:glutamatergic synapse"/>
    <property type="evidence" value="ECO:0000314"/>
    <property type="project" value="SynGO"/>
</dbReference>
<dbReference type="GO" id="GO:0005634">
    <property type="term" value="C:nucleus"/>
    <property type="evidence" value="ECO:0007669"/>
    <property type="project" value="UniProtKB-SubCell"/>
</dbReference>
<dbReference type="GO" id="GO:0048471">
    <property type="term" value="C:perinuclear region of cytoplasm"/>
    <property type="evidence" value="ECO:0000266"/>
    <property type="project" value="MGI"/>
</dbReference>
<dbReference type="GO" id="GO:0055037">
    <property type="term" value="C:recycling endosome"/>
    <property type="evidence" value="ECO:0000266"/>
    <property type="project" value="MGI"/>
</dbReference>
<dbReference type="GO" id="GO:0005524">
    <property type="term" value="F:ATP binding"/>
    <property type="evidence" value="ECO:0007669"/>
    <property type="project" value="UniProtKB-KW"/>
</dbReference>
<dbReference type="GO" id="GO:0106310">
    <property type="term" value="F:protein serine kinase activity"/>
    <property type="evidence" value="ECO:0007669"/>
    <property type="project" value="RHEA"/>
</dbReference>
<dbReference type="GO" id="GO:0004674">
    <property type="term" value="F:protein serine/threonine kinase activity"/>
    <property type="evidence" value="ECO:0000250"/>
    <property type="project" value="UniProtKB"/>
</dbReference>
<dbReference type="GO" id="GO:0030036">
    <property type="term" value="P:actin cytoskeleton organization"/>
    <property type="evidence" value="ECO:0000250"/>
    <property type="project" value="UniProtKB"/>
</dbReference>
<dbReference type="GO" id="GO:0035556">
    <property type="term" value="P:intracellular signal transduction"/>
    <property type="evidence" value="ECO:0000250"/>
    <property type="project" value="UniProtKB"/>
</dbReference>
<dbReference type="GO" id="GO:0007399">
    <property type="term" value="P:nervous system development"/>
    <property type="evidence" value="ECO:0007669"/>
    <property type="project" value="UniProtKB-KW"/>
</dbReference>
<dbReference type="GO" id="GO:0046330">
    <property type="term" value="P:positive regulation of JNK cascade"/>
    <property type="evidence" value="ECO:0000250"/>
    <property type="project" value="UniProtKB"/>
</dbReference>
<dbReference type="GO" id="GO:0046777">
    <property type="term" value="P:protein autophosphorylation"/>
    <property type="evidence" value="ECO:0000250"/>
    <property type="project" value="UniProtKB"/>
</dbReference>
<dbReference type="GO" id="GO:0006468">
    <property type="term" value="P:protein phosphorylation"/>
    <property type="evidence" value="ECO:0000250"/>
    <property type="project" value="UniProtKB"/>
</dbReference>
<dbReference type="GO" id="GO:0048814">
    <property type="term" value="P:regulation of dendrite morphogenesis"/>
    <property type="evidence" value="ECO:0000250"/>
    <property type="project" value="UniProtKB"/>
</dbReference>
<dbReference type="GO" id="GO:0098696">
    <property type="term" value="P:regulation of neurotransmitter receptor localization to postsynaptic specialization membrane"/>
    <property type="evidence" value="ECO:0000314"/>
    <property type="project" value="SynGO"/>
</dbReference>
<dbReference type="GO" id="GO:0016055">
    <property type="term" value="P:Wnt signaling pathway"/>
    <property type="evidence" value="ECO:0007669"/>
    <property type="project" value="UniProtKB-KW"/>
</dbReference>
<dbReference type="CDD" id="cd06637">
    <property type="entry name" value="STKc_TNIK"/>
    <property type="match status" value="1"/>
</dbReference>
<dbReference type="FunFam" id="1.10.510.10:FF:000003">
    <property type="entry name" value="TRAF2 and NCK-interacting protein kinase isoform 4"/>
    <property type="match status" value="1"/>
</dbReference>
<dbReference type="FunFam" id="3.30.200.20:FF:000006">
    <property type="entry name" value="TRAF2 and NCK-interacting protein kinase isoform 4"/>
    <property type="match status" value="1"/>
</dbReference>
<dbReference type="Gene3D" id="3.30.200.20">
    <property type="entry name" value="Phosphorylase Kinase, domain 1"/>
    <property type="match status" value="1"/>
</dbReference>
<dbReference type="Gene3D" id="1.10.510.10">
    <property type="entry name" value="Transferase(Phosphotransferase) domain 1"/>
    <property type="match status" value="1"/>
</dbReference>
<dbReference type="InterPro" id="IPR001180">
    <property type="entry name" value="CNH_dom"/>
</dbReference>
<dbReference type="InterPro" id="IPR011009">
    <property type="entry name" value="Kinase-like_dom_sf"/>
</dbReference>
<dbReference type="InterPro" id="IPR000719">
    <property type="entry name" value="Prot_kinase_dom"/>
</dbReference>
<dbReference type="InterPro" id="IPR017441">
    <property type="entry name" value="Protein_kinase_ATP_BS"/>
</dbReference>
<dbReference type="InterPro" id="IPR008271">
    <property type="entry name" value="Ser/Thr_kinase_AS"/>
</dbReference>
<dbReference type="InterPro" id="IPR051700">
    <property type="entry name" value="STE20_Ser-Thr_kinase"/>
</dbReference>
<dbReference type="PANTHER" id="PTHR47096">
    <property type="entry name" value="MISSHAPEN LIKE KINASE 1"/>
    <property type="match status" value="1"/>
</dbReference>
<dbReference type="PANTHER" id="PTHR47096:SF1">
    <property type="entry name" value="MISSHAPEN LIKE KINASE 1"/>
    <property type="match status" value="1"/>
</dbReference>
<dbReference type="Pfam" id="PF00780">
    <property type="entry name" value="CNH"/>
    <property type="match status" value="1"/>
</dbReference>
<dbReference type="Pfam" id="PF00069">
    <property type="entry name" value="Pkinase"/>
    <property type="match status" value="1"/>
</dbReference>
<dbReference type="SMART" id="SM00036">
    <property type="entry name" value="CNH"/>
    <property type="match status" value="1"/>
</dbReference>
<dbReference type="SMART" id="SM00220">
    <property type="entry name" value="S_TKc"/>
    <property type="match status" value="1"/>
</dbReference>
<dbReference type="SUPFAM" id="SSF56112">
    <property type="entry name" value="Protein kinase-like (PK-like)"/>
    <property type="match status" value="1"/>
</dbReference>
<dbReference type="PROSITE" id="PS50219">
    <property type="entry name" value="CNH"/>
    <property type="match status" value="1"/>
</dbReference>
<dbReference type="PROSITE" id="PS00107">
    <property type="entry name" value="PROTEIN_KINASE_ATP"/>
    <property type="match status" value="1"/>
</dbReference>
<dbReference type="PROSITE" id="PS50011">
    <property type="entry name" value="PROTEIN_KINASE_DOM"/>
    <property type="match status" value="1"/>
</dbReference>
<dbReference type="PROSITE" id="PS00108">
    <property type="entry name" value="PROTEIN_KINASE_ST"/>
    <property type="match status" value="1"/>
</dbReference>
<gene>
    <name type="primary">Tnik</name>
    <name type="synonym">Kiaa0551</name>
</gene>
<evidence type="ECO:0000250" key="1"/>
<evidence type="ECO:0000250" key="2">
    <source>
        <dbReference type="UniProtKB" id="Q9UKE5"/>
    </source>
</evidence>
<evidence type="ECO:0000255" key="3">
    <source>
        <dbReference type="PROSITE-ProRule" id="PRU00159"/>
    </source>
</evidence>
<evidence type="ECO:0000255" key="4">
    <source>
        <dbReference type="PROSITE-ProRule" id="PRU00795"/>
    </source>
</evidence>
<evidence type="ECO:0000255" key="5">
    <source>
        <dbReference type="PROSITE-ProRule" id="PRU10027"/>
    </source>
</evidence>
<evidence type="ECO:0000256" key="6">
    <source>
        <dbReference type="SAM" id="MobiDB-lite"/>
    </source>
</evidence>
<evidence type="ECO:0000269" key="7">
    <source>
    </source>
</evidence>
<evidence type="ECO:0000269" key="8">
    <source>
    </source>
</evidence>
<evidence type="ECO:0000303" key="9">
    <source>
    </source>
</evidence>
<evidence type="ECO:0000305" key="10"/>
<evidence type="ECO:0000312" key="11">
    <source>
        <dbReference type="EMBL" id="BAC40365.1"/>
    </source>
</evidence>
<evidence type="ECO:0007744" key="12">
    <source>
    </source>
</evidence>
<feature type="chain" id="PRO_0000086762" description="Traf2 and NCK-interacting protein kinase">
    <location>
        <begin position="1"/>
        <end position="1323"/>
    </location>
</feature>
<feature type="domain" description="Protein kinase" evidence="3">
    <location>
        <begin position="25"/>
        <end position="289"/>
    </location>
</feature>
<feature type="domain" description="CNH" evidence="4">
    <location>
        <begin position="1010"/>
        <end position="1297"/>
    </location>
</feature>
<feature type="region of interest" description="Disordered" evidence="6">
    <location>
        <begin position="284"/>
        <end position="347"/>
    </location>
</feature>
<feature type="region of interest" description="Mediates interaction with NEDD4" evidence="1">
    <location>
        <begin position="290"/>
        <end position="1010"/>
    </location>
</feature>
<feature type="region of interest" description="Disordered" evidence="6">
    <location>
        <begin position="397"/>
        <end position="559"/>
    </location>
</feature>
<feature type="region of interest" description="Disordered" evidence="6">
    <location>
        <begin position="571"/>
        <end position="838"/>
    </location>
</feature>
<feature type="region of interest" description="Disordered" evidence="6">
    <location>
        <begin position="939"/>
        <end position="960"/>
    </location>
</feature>
<feature type="compositionally biased region" description="Basic and acidic residues" evidence="6">
    <location>
        <begin position="288"/>
        <end position="307"/>
    </location>
</feature>
<feature type="compositionally biased region" description="Acidic residues" evidence="6">
    <location>
        <begin position="317"/>
        <end position="335"/>
    </location>
</feature>
<feature type="compositionally biased region" description="Basic and acidic residues" evidence="6">
    <location>
        <begin position="397"/>
        <end position="470"/>
    </location>
</feature>
<feature type="compositionally biased region" description="Basic and acidic residues" evidence="6">
    <location>
        <begin position="477"/>
        <end position="494"/>
    </location>
</feature>
<feature type="compositionally biased region" description="Basic and acidic residues" evidence="6">
    <location>
        <begin position="503"/>
        <end position="513"/>
    </location>
</feature>
<feature type="compositionally biased region" description="Basic and acidic residues" evidence="6">
    <location>
        <begin position="623"/>
        <end position="640"/>
    </location>
</feature>
<feature type="compositionally biased region" description="Low complexity" evidence="6">
    <location>
        <begin position="691"/>
        <end position="726"/>
    </location>
</feature>
<feature type="compositionally biased region" description="Basic and acidic residues" evidence="6">
    <location>
        <begin position="746"/>
        <end position="760"/>
    </location>
</feature>
<feature type="compositionally biased region" description="Basic and acidic residues" evidence="6">
    <location>
        <begin position="772"/>
        <end position="790"/>
    </location>
</feature>
<feature type="compositionally biased region" description="Acidic residues" evidence="6">
    <location>
        <begin position="797"/>
        <end position="810"/>
    </location>
</feature>
<feature type="compositionally biased region" description="Acidic residues" evidence="6">
    <location>
        <begin position="950"/>
        <end position="959"/>
    </location>
</feature>
<feature type="active site" description="Proton acceptor" evidence="3 5">
    <location>
        <position position="153"/>
    </location>
</feature>
<feature type="binding site" evidence="3">
    <location>
        <begin position="31"/>
        <end position="39"/>
    </location>
    <ligand>
        <name>ATP</name>
        <dbReference type="ChEBI" id="CHEBI:30616"/>
    </ligand>
</feature>
<feature type="binding site" evidence="3">
    <location>
        <position position="54"/>
    </location>
    <ligand>
        <name>ATP</name>
        <dbReference type="ChEBI" id="CHEBI:30616"/>
    </ligand>
</feature>
<feature type="modified residue" description="Phosphothreonine" evidence="12">
    <location>
        <position position="187"/>
    </location>
</feature>
<feature type="modified residue" description="Phosphoserine" evidence="12">
    <location>
        <position position="324"/>
    </location>
</feature>
<feature type="modified residue" description="Phosphoserine" evidence="12">
    <location>
        <position position="326"/>
    </location>
</feature>
<feature type="modified residue" description="Phosphoserine" evidence="2">
    <location>
        <position position="531"/>
    </location>
</feature>
<feature type="modified residue" description="Phosphoserine" evidence="12">
    <location>
        <position position="541"/>
    </location>
</feature>
<feature type="modified residue" description="Phosphothreonine" evidence="12">
    <location>
        <position position="552"/>
    </location>
</feature>
<feature type="modified residue" description="Phosphoserine" evidence="2">
    <location>
        <position position="571"/>
    </location>
</feature>
<feature type="modified residue" description="Phosphoserine" evidence="2">
    <location>
        <position position="579"/>
    </location>
</feature>
<feature type="modified residue" description="Phosphoserine" evidence="2">
    <location>
        <position position="581"/>
    </location>
</feature>
<feature type="modified residue" description="Phosphoserine" evidence="12">
    <location>
        <position position="611"/>
    </location>
</feature>
<feature type="modified residue" description="Phosphoserine" evidence="2">
    <location>
        <position position="649"/>
    </location>
</feature>
<feature type="modified residue" description="Phosphoserine" evidence="2">
    <location>
        <position position="651"/>
    </location>
</feature>
<feature type="modified residue" description="Phosphoserine" evidence="12">
    <location>
        <position position="659"/>
    </location>
</feature>
<feature type="modified residue" description="Phosphoserine" evidence="2">
    <location>
        <position position="672"/>
    </location>
</feature>
<feature type="modified residue" description="Phosphoserine" evidence="2">
    <location>
        <position position="678"/>
    </location>
</feature>
<feature type="modified residue" description="Phosphoserine" evidence="2">
    <location>
        <position position="691"/>
    </location>
</feature>
<feature type="modified residue" description="Phosphoserine" evidence="12">
    <location>
        <position position="735"/>
    </location>
</feature>
<feature type="modified residue" description="Phosphoserine" evidence="2">
    <location>
        <position position="737"/>
    </location>
</feature>
<feature type="modified residue" description="Phosphoserine" evidence="12">
    <location>
        <position position="740"/>
    </location>
</feature>
<feature type="modified residue" description="Phosphoserine" evidence="2">
    <location>
        <position position="922"/>
    </location>
</feature>
<feature type="splice variant" id="VSP_007351" description="In isoform 2." evidence="9">
    <original>YGIGSSTKASFTPFVDPRVYQTSPTDEDEEDDESSAA</original>
    <variation>SLK</variation>
    <location>
        <begin position="926"/>
        <end position="962"/>
    </location>
</feature>
<feature type="sequence conflict" description="In Ref. 1; BAC40365." evidence="10" ref="1">
    <original>S</original>
    <variation>C</variation>
    <location>
        <position position="735"/>
    </location>
</feature>
<reference key="1">
    <citation type="journal article" date="2005" name="Science">
        <title>The transcriptional landscape of the mammalian genome.</title>
        <authorList>
            <person name="Carninci P."/>
            <person name="Kasukawa T."/>
            <person name="Katayama S."/>
            <person name="Gough J."/>
            <person name="Frith M.C."/>
            <person name="Maeda N."/>
            <person name="Oyama R."/>
            <person name="Ravasi T."/>
            <person name="Lenhard B."/>
            <person name="Wells C."/>
            <person name="Kodzius R."/>
            <person name="Shimokawa K."/>
            <person name="Bajic V.B."/>
            <person name="Brenner S.E."/>
            <person name="Batalov S."/>
            <person name="Forrest A.R."/>
            <person name="Zavolan M."/>
            <person name="Davis M.J."/>
            <person name="Wilming L.G."/>
            <person name="Aidinis V."/>
            <person name="Allen J.E."/>
            <person name="Ambesi-Impiombato A."/>
            <person name="Apweiler R."/>
            <person name="Aturaliya R.N."/>
            <person name="Bailey T.L."/>
            <person name="Bansal M."/>
            <person name="Baxter L."/>
            <person name="Beisel K.W."/>
            <person name="Bersano T."/>
            <person name="Bono H."/>
            <person name="Chalk A.M."/>
            <person name="Chiu K.P."/>
            <person name="Choudhary V."/>
            <person name="Christoffels A."/>
            <person name="Clutterbuck D.R."/>
            <person name="Crowe M.L."/>
            <person name="Dalla E."/>
            <person name="Dalrymple B.P."/>
            <person name="de Bono B."/>
            <person name="Della Gatta G."/>
            <person name="di Bernardo D."/>
            <person name="Down T."/>
            <person name="Engstrom P."/>
            <person name="Fagiolini M."/>
            <person name="Faulkner G."/>
            <person name="Fletcher C.F."/>
            <person name="Fukushima T."/>
            <person name="Furuno M."/>
            <person name="Futaki S."/>
            <person name="Gariboldi M."/>
            <person name="Georgii-Hemming P."/>
            <person name="Gingeras T.R."/>
            <person name="Gojobori T."/>
            <person name="Green R.E."/>
            <person name="Gustincich S."/>
            <person name="Harbers M."/>
            <person name="Hayashi Y."/>
            <person name="Hensch T.K."/>
            <person name="Hirokawa N."/>
            <person name="Hill D."/>
            <person name="Huminiecki L."/>
            <person name="Iacono M."/>
            <person name="Ikeo K."/>
            <person name="Iwama A."/>
            <person name="Ishikawa T."/>
            <person name="Jakt M."/>
            <person name="Kanapin A."/>
            <person name="Katoh M."/>
            <person name="Kawasawa Y."/>
            <person name="Kelso J."/>
            <person name="Kitamura H."/>
            <person name="Kitano H."/>
            <person name="Kollias G."/>
            <person name="Krishnan S.P."/>
            <person name="Kruger A."/>
            <person name="Kummerfeld S.K."/>
            <person name="Kurochkin I.V."/>
            <person name="Lareau L.F."/>
            <person name="Lazarevic D."/>
            <person name="Lipovich L."/>
            <person name="Liu J."/>
            <person name="Liuni S."/>
            <person name="McWilliam S."/>
            <person name="Madan Babu M."/>
            <person name="Madera M."/>
            <person name="Marchionni L."/>
            <person name="Matsuda H."/>
            <person name="Matsuzawa S."/>
            <person name="Miki H."/>
            <person name="Mignone F."/>
            <person name="Miyake S."/>
            <person name="Morris K."/>
            <person name="Mottagui-Tabar S."/>
            <person name="Mulder N."/>
            <person name="Nakano N."/>
            <person name="Nakauchi H."/>
            <person name="Ng P."/>
            <person name="Nilsson R."/>
            <person name="Nishiguchi S."/>
            <person name="Nishikawa S."/>
            <person name="Nori F."/>
            <person name="Ohara O."/>
            <person name="Okazaki Y."/>
            <person name="Orlando V."/>
            <person name="Pang K.C."/>
            <person name="Pavan W.J."/>
            <person name="Pavesi G."/>
            <person name="Pesole G."/>
            <person name="Petrovsky N."/>
            <person name="Piazza S."/>
            <person name="Reed J."/>
            <person name="Reid J.F."/>
            <person name="Ring B.Z."/>
            <person name="Ringwald M."/>
            <person name="Rost B."/>
            <person name="Ruan Y."/>
            <person name="Salzberg S.L."/>
            <person name="Sandelin A."/>
            <person name="Schneider C."/>
            <person name="Schoenbach C."/>
            <person name="Sekiguchi K."/>
            <person name="Semple C.A."/>
            <person name="Seno S."/>
            <person name="Sessa L."/>
            <person name="Sheng Y."/>
            <person name="Shibata Y."/>
            <person name="Shimada H."/>
            <person name="Shimada K."/>
            <person name="Silva D."/>
            <person name="Sinclair B."/>
            <person name="Sperling S."/>
            <person name="Stupka E."/>
            <person name="Sugiura K."/>
            <person name="Sultana R."/>
            <person name="Takenaka Y."/>
            <person name="Taki K."/>
            <person name="Tammoja K."/>
            <person name="Tan S.L."/>
            <person name="Tang S."/>
            <person name="Taylor M.S."/>
            <person name="Tegner J."/>
            <person name="Teichmann S.A."/>
            <person name="Ueda H.R."/>
            <person name="van Nimwegen E."/>
            <person name="Verardo R."/>
            <person name="Wei C.L."/>
            <person name="Yagi K."/>
            <person name="Yamanishi H."/>
            <person name="Zabarovsky E."/>
            <person name="Zhu S."/>
            <person name="Zimmer A."/>
            <person name="Hide W."/>
            <person name="Bult C."/>
            <person name="Grimmond S.M."/>
            <person name="Teasdale R.D."/>
            <person name="Liu E.T."/>
            <person name="Brusic V."/>
            <person name="Quackenbush J."/>
            <person name="Wahlestedt C."/>
            <person name="Mattick J.S."/>
            <person name="Hume D.A."/>
            <person name="Kai C."/>
            <person name="Sasaki D."/>
            <person name="Tomaru Y."/>
            <person name="Fukuda S."/>
            <person name="Kanamori-Katayama M."/>
            <person name="Suzuki M."/>
            <person name="Aoki J."/>
            <person name="Arakawa T."/>
            <person name="Iida J."/>
            <person name="Imamura K."/>
            <person name="Itoh M."/>
            <person name="Kato T."/>
            <person name="Kawaji H."/>
            <person name="Kawagashira N."/>
            <person name="Kawashima T."/>
            <person name="Kojima M."/>
            <person name="Kondo S."/>
            <person name="Konno H."/>
            <person name="Nakano K."/>
            <person name="Ninomiya N."/>
            <person name="Nishio T."/>
            <person name="Okada M."/>
            <person name="Plessy C."/>
            <person name="Shibata K."/>
            <person name="Shiraki T."/>
            <person name="Suzuki S."/>
            <person name="Tagami M."/>
            <person name="Waki K."/>
            <person name="Watahiki A."/>
            <person name="Okamura-Oho Y."/>
            <person name="Suzuki H."/>
            <person name="Kawai J."/>
            <person name="Hayashizaki Y."/>
        </authorList>
    </citation>
    <scope>NUCLEOTIDE SEQUENCE [LARGE SCALE MRNA] OF 1-327 AND 735-1323 (ISOFORM 1)</scope>
    <source>
        <strain>C57BL/6J</strain>
        <strain>NOD</strain>
        <tissue>Hypothalamus</tissue>
        <tissue>Thymus</tissue>
    </source>
</reference>
<reference key="2">
    <citation type="journal article" date="2004" name="Genome Res.">
        <title>The status, quality, and expansion of the NIH full-length cDNA project: the Mammalian Gene Collection (MGC).</title>
        <authorList>
            <consortium name="The MGC Project Team"/>
        </authorList>
    </citation>
    <scope>NUCLEOTIDE SEQUENCE [LARGE SCALE MRNA] OF 311-1323 (ISOFORM 1)</scope>
    <source>
        <tissue>Embryo</tissue>
    </source>
</reference>
<reference key="3">
    <citation type="journal article" date="2003" name="DNA Res.">
        <title>Prediction of the coding sequences of mouse homologues of KIAA gene: II. The complete nucleotide sequences of 400 mouse KIAA-homologous cDNAs identified by screening of terminal sequences of cDNA clones randomly sampled from size-fractionated libraries.</title>
        <authorList>
            <person name="Okazaki N."/>
            <person name="Kikuno R."/>
            <person name="Ohara R."/>
            <person name="Inamoto S."/>
            <person name="Aizawa H."/>
            <person name="Yuasa S."/>
            <person name="Nakajima D."/>
            <person name="Nagase T."/>
            <person name="Ohara O."/>
            <person name="Koga H."/>
        </authorList>
    </citation>
    <scope>NUCLEOTIDE SEQUENCE [LARGE SCALE MRNA] OF 359-842 (ISOFORM 2)</scope>
    <source>
        <tissue>Brain</tissue>
    </source>
</reference>
<reference key="4">
    <citation type="submission" date="2003-02" db="EMBL/GenBank/DDBJ databases">
        <authorList>
            <person name="Okazaki N."/>
            <person name="Kikuno R."/>
            <person name="Nagase T."/>
            <person name="Ohara O."/>
            <person name="Koga H."/>
        </authorList>
    </citation>
    <scope>SEQUENCE REVISION</scope>
</reference>
<reference key="5">
    <citation type="journal article" date="2009" name="EMBO J.">
        <title>The kinase TNIK is an essential activator of Wnt target genes.</title>
        <authorList>
            <person name="Mahmoudi T."/>
            <person name="Li V.S.W."/>
            <person name="Ng S.S."/>
            <person name="Taouatas N."/>
            <person name="Vries R.G.J."/>
            <person name="Mohammed S."/>
            <person name="Heck A.J."/>
            <person name="Clevers H."/>
        </authorList>
    </citation>
    <scope>INTERACTION WITH TCF7L2 AND CTNNB1</scope>
    <scope>SUBCELLULAR LOCATION</scope>
    <scope>TISSUE SPECIFICITY</scope>
</reference>
<reference key="6">
    <citation type="journal article" date="2010" name="Cell">
        <title>A tissue-specific atlas of mouse protein phosphorylation and expression.</title>
        <authorList>
            <person name="Huttlin E.L."/>
            <person name="Jedrychowski M.P."/>
            <person name="Elias J.E."/>
            <person name="Goswami T."/>
            <person name="Rad R."/>
            <person name="Beausoleil S.A."/>
            <person name="Villen J."/>
            <person name="Haas W."/>
            <person name="Sowa M.E."/>
            <person name="Gygi S.P."/>
        </authorList>
    </citation>
    <scope>PHOSPHORYLATION [LARGE SCALE ANALYSIS] AT THR-187; SER-324; SER-326; SER-541; THR-552; SER-611; SER-659; SER-735 AND SER-740</scope>
    <scope>IDENTIFICATION BY MASS SPECTROMETRY [LARGE SCALE ANALYSIS]</scope>
    <source>
        <tissue>Brain</tissue>
        <tissue>Heart</tissue>
        <tissue>Lung</tissue>
        <tissue>Spleen</tissue>
        <tissue>Testis</tissue>
    </source>
</reference>
<reference key="7">
    <citation type="journal article" date="2010" name="Neuron">
        <title>Regulation of Rap2A by the ubiquitin ligase Nedd4-1 controls neurite development.</title>
        <authorList>
            <person name="Kawabe H."/>
            <person name="Neeb A."/>
            <person name="Dimova K."/>
            <person name="Young S.M. Jr."/>
            <person name="Takeda M."/>
            <person name="Katsurabayashi S."/>
            <person name="Mitkovski M."/>
            <person name="Malakhova O.A."/>
            <person name="Zhang D.E."/>
            <person name="Umikawa M."/>
            <person name="Kariya K."/>
            <person name="Goebbels S."/>
            <person name="Nave K.A."/>
            <person name="Rosenmund C."/>
            <person name="Jahn O."/>
            <person name="Rhee J."/>
            <person name="Brose N."/>
        </authorList>
    </citation>
    <scope>INTERACTION WITH NEDD4 AND RAP2A</scope>
</reference>
<protein>
    <recommendedName>
        <fullName>Traf2 and NCK-interacting protein kinase</fullName>
        <ecNumber>2.7.11.1</ecNumber>
    </recommendedName>
</protein>
<name>TNIK_MOUSE</name>